<comment type="similarity">
    <text evidence="1">Belongs to the UPF0229 family.</text>
</comment>
<evidence type="ECO:0000255" key="1">
    <source>
        <dbReference type="HAMAP-Rule" id="MF_01232"/>
    </source>
</evidence>
<evidence type="ECO:0000256" key="2">
    <source>
        <dbReference type="SAM" id="MobiDB-lite"/>
    </source>
</evidence>
<gene>
    <name evidence="1" type="primary">yeaH</name>
    <name type="ordered locus">SPAB_02064</name>
</gene>
<proteinExistence type="inferred from homology"/>
<name>YEAH_SALPB</name>
<protein>
    <recommendedName>
        <fullName evidence="1">UPF0229 protein YeaH</fullName>
    </recommendedName>
</protein>
<reference key="1">
    <citation type="submission" date="2007-11" db="EMBL/GenBank/DDBJ databases">
        <authorList>
            <consortium name="The Salmonella enterica serovar Paratyphi B Genome Sequencing Project"/>
            <person name="McClelland M."/>
            <person name="Sanderson E.K."/>
            <person name="Porwollik S."/>
            <person name="Spieth J."/>
            <person name="Clifton W.S."/>
            <person name="Fulton R."/>
            <person name="Cordes M."/>
            <person name="Wollam A."/>
            <person name="Shah N."/>
            <person name="Pepin K."/>
            <person name="Bhonagiri V."/>
            <person name="Nash W."/>
            <person name="Johnson M."/>
            <person name="Thiruvilangam P."/>
            <person name="Wilson R."/>
        </authorList>
    </citation>
    <scope>NUCLEOTIDE SEQUENCE [LARGE SCALE GENOMIC DNA]</scope>
    <source>
        <strain>ATCC BAA-1250 / SPB7</strain>
    </source>
</reference>
<accession>A9N2A1</accession>
<feature type="chain" id="PRO_1000085721" description="UPF0229 protein YeaH">
    <location>
        <begin position="1"/>
        <end position="427"/>
    </location>
</feature>
<feature type="region of interest" description="Disordered" evidence="2">
    <location>
        <begin position="79"/>
        <end position="110"/>
    </location>
</feature>
<feature type="compositionally biased region" description="Basic and acidic residues" evidence="2">
    <location>
        <begin position="79"/>
        <end position="90"/>
    </location>
</feature>
<feature type="compositionally biased region" description="Gly residues" evidence="2">
    <location>
        <begin position="92"/>
        <end position="102"/>
    </location>
</feature>
<dbReference type="EMBL" id="CP000886">
    <property type="protein sequence ID" value="ABX67450.1"/>
    <property type="molecule type" value="Genomic_DNA"/>
</dbReference>
<dbReference type="RefSeq" id="WP_000219721.1">
    <property type="nucleotide sequence ID" value="NC_010102.1"/>
</dbReference>
<dbReference type="SMR" id="A9N2A1"/>
<dbReference type="KEGG" id="spq:SPAB_02064"/>
<dbReference type="PATRIC" id="fig|1016998.12.peg.1951"/>
<dbReference type="HOGENOM" id="CLU_049702_0_0_6"/>
<dbReference type="BioCyc" id="SENT1016998:SPAB_RS08425-MONOMER"/>
<dbReference type="Proteomes" id="UP000008556">
    <property type="component" value="Chromosome"/>
</dbReference>
<dbReference type="HAMAP" id="MF_01232">
    <property type="entry name" value="UPF0229"/>
    <property type="match status" value="1"/>
</dbReference>
<dbReference type="InterPro" id="IPR006698">
    <property type="entry name" value="UPF0229"/>
</dbReference>
<dbReference type="NCBIfam" id="NF003707">
    <property type="entry name" value="PRK05325.1-2"/>
    <property type="match status" value="1"/>
</dbReference>
<dbReference type="NCBIfam" id="NF003708">
    <property type="entry name" value="PRK05325.1-3"/>
    <property type="match status" value="1"/>
</dbReference>
<dbReference type="PANTHER" id="PTHR30510">
    <property type="entry name" value="UPF0229 PROTEIN YEAH"/>
    <property type="match status" value="1"/>
</dbReference>
<dbReference type="PANTHER" id="PTHR30510:SF2">
    <property type="entry name" value="UPF0229 PROTEIN YEAH"/>
    <property type="match status" value="1"/>
</dbReference>
<dbReference type="Pfam" id="PF04285">
    <property type="entry name" value="DUF444"/>
    <property type="match status" value="1"/>
</dbReference>
<sequence>MTWFIDRRLNGKNKSTVNRQRFLRRYKAQIKQSISEAINKRSVTDVDSGESVSIPTDDISEPMFHQGRGGLRHRVHPGNDHFIQNDRIERPQGGGGGSGSGQGQASQDGEGQDEFVFQISKDEYLDLLFEDLALPNLKKNQHRQLNEYKTHRAGFTSNGVPANISVVRSLQNSLARRTAMTAGKRRELHALETELETISHSEPAQLLEEERLRREIAELRAKIERVPFIDTFDLRYKNYEKRPEPSSQAVMFCLMDVSGSMDQATKDMAKRFYILLYLFLSRTYKNVEVVYIRHHTQAKEVDEHEFFYSQETGGTIVSSALKLMDEVVKERYDPGQWNIYAAQASDGDNWADDSPLCHEILAKKLLPVVRYYSYIEITRRAHQTLWREYEHLQATFDNFAMQHIRDQEDIYPVFRELFQKQSANQSA</sequence>
<organism>
    <name type="scientific">Salmonella paratyphi B (strain ATCC BAA-1250 / SPB7)</name>
    <dbReference type="NCBI Taxonomy" id="1016998"/>
    <lineage>
        <taxon>Bacteria</taxon>
        <taxon>Pseudomonadati</taxon>
        <taxon>Pseudomonadota</taxon>
        <taxon>Gammaproteobacteria</taxon>
        <taxon>Enterobacterales</taxon>
        <taxon>Enterobacteriaceae</taxon>
        <taxon>Salmonella</taxon>
    </lineage>
</organism>